<proteinExistence type="inferred from homology"/>
<name>MUTS_CLOK5</name>
<evidence type="ECO:0000255" key="1">
    <source>
        <dbReference type="HAMAP-Rule" id="MF_00096"/>
    </source>
</evidence>
<evidence type="ECO:0000256" key="2">
    <source>
        <dbReference type="SAM" id="MobiDB-lite"/>
    </source>
</evidence>
<feature type="chain" id="PRO_1000075553" description="DNA mismatch repair protein MutS">
    <location>
        <begin position="1"/>
        <end position="871"/>
    </location>
</feature>
<feature type="region of interest" description="Disordered" evidence="2">
    <location>
        <begin position="801"/>
        <end position="825"/>
    </location>
</feature>
<feature type="binding site" evidence="1">
    <location>
        <begin position="616"/>
        <end position="623"/>
    </location>
    <ligand>
        <name>ATP</name>
        <dbReference type="ChEBI" id="CHEBI:30616"/>
    </ligand>
</feature>
<keyword id="KW-0067">ATP-binding</keyword>
<keyword id="KW-0227">DNA damage</keyword>
<keyword id="KW-0234">DNA repair</keyword>
<keyword id="KW-0238">DNA-binding</keyword>
<keyword id="KW-0547">Nucleotide-binding</keyword>
<keyword id="KW-1185">Reference proteome</keyword>
<protein>
    <recommendedName>
        <fullName evidence="1">DNA mismatch repair protein MutS</fullName>
    </recommendedName>
</protein>
<reference key="1">
    <citation type="journal article" date="2008" name="Proc. Natl. Acad. Sci. U.S.A.">
        <title>The genome of Clostridium kluyveri, a strict anaerobe with unique metabolic features.</title>
        <authorList>
            <person name="Seedorf H."/>
            <person name="Fricke W.F."/>
            <person name="Veith B."/>
            <person name="Brueggemann H."/>
            <person name="Liesegang H."/>
            <person name="Strittmatter A."/>
            <person name="Miethke M."/>
            <person name="Buckel W."/>
            <person name="Hinderberger J."/>
            <person name="Li F."/>
            <person name="Hagemeier C."/>
            <person name="Thauer R.K."/>
            <person name="Gottschalk G."/>
        </authorList>
    </citation>
    <scope>NUCLEOTIDE SEQUENCE [LARGE SCALE GENOMIC DNA]</scope>
    <source>
        <strain>ATCC 8527 / DSM 555 / NBRC 12016 / NCIMB 10680 / K1</strain>
    </source>
</reference>
<comment type="function">
    <text evidence="1">This protein is involved in the repair of mismatches in DNA. It is possible that it carries out the mismatch recognition step. This protein has a weak ATPase activity.</text>
</comment>
<comment type="similarity">
    <text evidence="1">Belongs to the DNA mismatch repair MutS family.</text>
</comment>
<gene>
    <name evidence="1" type="primary">mutS</name>
    <name type="ordered locus">CKL_1574</name>
</gene>
<dbReference type="EMBL" id="CP000673">
    <property type="protein sequence ID" value="EDK33616.1"/>
    <property type="molecule type" value="Genomic_DNA"/>
</dbReference>
<dbReference type="RefSeq" id="WP_012101969.1">
    <property type="nucleotide sequence ID" value="NC_009706.1"/>
</dbReference>
<dbReference type="SMR" id="A5N8I5"/>
<dbReference type="STRING" id="431943.CKL_1574"/>
<dbReference type="KEGG" id="ckl:CKL_1574"/>
<dbReference type="eggNOG" id="COG0249">
    <property type="taxonomic scope" value="Bacteria"/>
</dbReference>
<dbReference type="HOGENOM" id="CLU_002472_4_0_9"/>
<dbReference type="Proteomes" id="UP000002411">
    <property type="component" value="Chromosome"/>
</dbReference>
<dbReference type="GO" id="GO:0005829">
    <property type="term" value="C:cytosol"/>
    <property type="evidence" value="ECO:0007669"/>
    <property type="project" value="TreeGrafter"/>
</dbReference>
<dbReference type="GO" id="GO:0005524">
    <property type="term" value="F:ATP binding"/>
    <property type="evidence" value="ECO:0007669"/>
    <property type="project" value="UniProtKB-UniRule"/>
</dbReference>
<dbReference type="GO" id="GO:0140664">
    <property type="term" value="F:ATP-dependent DNA damage sensor activity"/>
    <property type="evidence" value="ECO:0007669"/>
    <property type="project" value="InterPro"/>
</dbReference>
<dbReference type="GO" id="GO:0003684">
    <property type="term" value="F:damaged DNA binding"/>
    <property type="evidence" value="ECO:0007669"/>
    <property type="project" value="UniProtKB-UniRule"/>
</dbReference>
<dbReference type="GO" id="GO:0030983">
    <property type="term" value="F:mismatched DNA binding"/>
    <property type="evidence" value="ECO:0007669"/>
    <property type="project" value="InterPro"/>
</dbReference>
<dbReference type="GO" id="GO:0006298">
    <property type="term" value="P:mismatch repair"/>
    <property type="evidence" value="ECO:0007669"/>
    <property type="project" value="UniProtKB-UniRule"/>
</dbReference>
<dbReference type="CDD" id="cd03284">
    <property type="entry name" value="ABC_MutS1"/>
    <property type="match status" value="1"/>
</dbReference>
<dbReference type="FunFam" id="1.10.1420.10:FF:000007">
    <property type="entry name" value="DNA mismatch repair protein MutS"/>
    <property type="match status" value="1"/>
</dbReference>
<dbReference type="FunFam" id="3.40.1170.10:FF:000001">
    <property type="entry name" value="DNA mismatch repair protein MutS"/>
    <property type="match status" value="1"/>
</dbReference>
<dbReference type="FunFam" id="3.40.50.300:FF:001579">
    <property type="entry name" value="DNA mismatch repair protein MutS"/>
    <property type="match status" value="1"/>
</dbReference>
<dbReference type="Gene3D" id="1.10.1420.10">
    <property type="match status" value="2"/>
</dbReference>
<dbReference type="Gene3D" id="3.40.1170.10">
    <property type="entry name" value="DNA repair protein MutS, domain I"/>
    <property type="match status" value="1"/>
</dbReference>
<dbReference type="Gene3D" id="3.30.420.110">
    <property type="entry name" value="MutS, connector domain"/>
    <property type="match status" value="1"/>
</dbReference>
<dbReference type="Gene3D" id="3.40.50.300">
    <property type="entry name" value="P-loop containing nucleotide triphosphate hydrolases"/>
    <property type="match status" value="1"/>
</dbReference>
<dbReference type="HAMAP" id="MF_00096">
    <property type="entry name" value="MutS"/>
    <property type="match status" value="1"/>
</dbReference>
<dbReference type="InterPro" id="IPR005748">
    <property type="entry name" value="DNA_mismatch_repair_MutS"/>
</dbReference>
<dbReference type="InterPro" id="IPR007695">
    <property type="entry name" value="DNA_mismatch_repair_MutS-lik_N"/>
</dbReference>
<dbReference type="InterPro" id="IPR017261">
    <property type="entry name" value="DNA_mismatch_repair_MutS/MSH"/>
</dbReference>
<dbReference type="InterPro" id="IPR000432">
    <property type="entry name" value="DNA_mismatch_repair_MutS_C"/>
</dbReference>
<dbReference type="InterPro" id="IPR007861">
    <property type="entry name" value="DNA_mismatch_repair_MutS_clamp"/>
</dbReference>
<dbReference type="InterPro" id="IPR007696">
    <property type="entry name" value="DNA_mismatch_repair_MutS_core"/>
</dbReference>
<dbReference type="InterPro" id="IPR016151">
    <property type="entry name" value="DNA_mismatch_repair_MutS_N"/>
</dbReference>
<dbReference type="InterPro" id="IPR036187">
    <property type="entry name" value="DNA_mismatch_repair_MutS_sf"/>
</dbReference>
<dbReference type="InterPro" id="IPR007860">
    <property type="entry name" value="DNA_mmatch_repair_MutS_con_dom"/>
</dbReference>
<dbReference type="InterPro" id="IPR045076">
    <property type="entry name" value="MutS"/>
</dbReference>
<dbReference type="InterPro" id="IPR036678">
    <property type="entry name" value="MutS_con_dom_sf"/>
</dbReference>
<dbReference type="InterPro" id="IPR027417">
    <property type="entry name" value="P-loop_NTPase"/>
</dbReference>
<dbReference type="NCBIfam" id="TIGR01070">
    <property type="entry name" value="mutS1"/>
    <property type="match status" value="1"/>
</dbReference>
<dbReference type="NCBIfam" id="NF003810">
    <property type="entry name" value="PRK05399.1"/>
    <property type="match status" value="1"/>
</dbReference>
<dbReference type="PANTHER" id="PTHR11361:SF34">
    <property type="entry name" value="DNA MISMATCH REPAIR PROTEIN MSH1, MITOCHONDRIAL"/>
    <property type="match status" value="1"/>
</dbReference>
<dbReference type="PANTHER" id="PTHR11361">
    <property type="entry name" value="DNA MISMATCH REPAIR PROTEIN MUTS FAMILY MEMBER"/>
    <property type="match status" value="1"/>
</dbReference>
<dbReference type="Pfam" id="PF01624">
    <property type="entry name" value="MutS_I"/>
    <property type="match status" value="1"/>
</dbReference>
<dbReference type="Pfam" id="PF05188">
    <property type="entry name" value="MutS_II"/>
    <property type="match status" value="1"/>
</dbReference>
<dbReference type="Pfam" id="PF05192">
    <property type="entry name" value="MutS_III"/>
    <property type="match status" value="1"/>
</dbReference>
<dbReference type="Pfam" id="PF05190">
    <property type="entry name" value="MutS_IV"/>
    <property type="match status" value="1"/>
</dbReference>
<dbReference type="Pfam" id="PF00488">
    <property type="entry name" value="MutS_V"/>
    <property type="match status" value="1"/>
</dbReference>
<dbReference type="PIRSF" id="PIRSF037677">
    <property type="entry name" value="DNA_mis_repair_Msh6"/>
    <property type="match status" value="1"/>
</dbReference>
<dbReference type="SMART" id="SM00534">
    <property type="entry name" value="MUTSac"/>
    <property type="match status" value="1"/>
</dbReference>
<dbReference type="SMART" id="SM00533">
    <property type="entry name" value="MUTSd"/>
    <property type="match status" value="1"/>
</dbReference>
<dbReference type="SUPFAM" id="SSF55271">
    <property type="entry name" value="DNA repair protein MutS, domain I"/>
    <property type="match status" value="1"/>
</dbReference>
<dbReference type="SUPFAM" id="SSF53150">
    <property type="entry name" value="DNA repair protein MutS, domain II"/>
    <property type="match status" value="1"/>
</dbReference>
<dbReference type="SUPFAM" id="SSF48334">
    <property type="entry name" value="DNA repair protein MutS, domain III"/>
    <property type="match status" value="1"/>
</dbReference>
<dbReference type="SUPFAM" id="SSF52540">
    <property type="entry name" value="P-loop containing nucleoside triphosphate hydrolases"/>
    <property type="match status" value="1"/>
</dbReference>
<dbReference type="PROSITE" id="PS00486">
    <property type="entry name" value="DNA_MISMATCH_REPAIR_2"/>
    <property type="match status" value="1"/>
</dbReference>
<accession>A5N8I5</accession>
<organism>
    <name type="scientific">Clostridium kluyveri (strain ATCC 8527 / DSM 555 / NBRC 12016 / NCIMB 10680 / K1)</name>
    <dbReference type="NCBI Taxonomy" id="431943"/>
    <lineage>
        <taxon>Bacteria</taxon>
        <taxon>Bacillati</taxon>
        <taxon>Bacillota</taxon>
        <taxon>Clostridia</taxon>
        <taxon>Eubacteriales</taxon>
        <taxon>Clostridiaceae</taxon>
        <taxon>Clostridium</taxon>
    </lineage>
</organism>
<sequence>MGLTPMMRQYMEIKENYKDCILFFRLGDFYEMFFDDAKIAAAELELVLTARECGLKEKAPMCGIPYHAAKSYIGRMVNKGYKIAICEQLEDPAQSKGIVKRGIIKVITPGTYMDSYFLDENENNYIMCLYINNNEGSNCALCFADISTGEFNCTDTPFNLSVILDEICKFNPREIIIQEDIDSNILQGIVEVFNETFSRVDECYFQKGEEVLREQFKDLNLREYTPEIIKCGGALVKYIKHTQKTNLSHINKFQYYNIVDYLTIDINSKRNLEIVESLRESKKKGSLLGVIDKTNTSMGGRQLRKWIEQPLIDRNKIMERLDSVEEILNNICYHEDLKEALKNIYDIERLAGKISSKSVNAKELNSLKSSIEKIPDIKVILSNFETSLLKNMYKNLDELKDIYMLLDKAILDNPSVSLKEGNLIKEGYDSEIDRLKEAKVKGKDWIASLESSERELTKIKSLKIGYNKVFGYYIEVTKSNLNLVPEHRYIRKQTLSNAERYITPELKEMEDKILGAEEKLIYLEYNAFVEVRDKVEKEVTRIQNSARIISEVDCLTSLARAALENNYCKPEITLSDRVYIEEGRHPVVENMLSTGEFVSNDTDIDTGENQLLLITGPNMAGKSTYMRQVALVTIMAQIGSFVPAKSASISICDKIFTRIGASDDLASGKSTFMVEMWEVSNILKNATNKSLILLDEVGRGTSTYDGLSIAWSVIEYICRESKLRCKTLFATHYHELTKLEGKIKGVKNYCVSVKEVENNIVFLRKIIRGGADQSYGIEVAKLAGLPEEVLKRAREILNSLETEKTEESMEGTNLPKKKKEEKTSSQGEQLKFLDIEKENLINEIRDIDILNMTPMEGFNKLYDIIKKVKSI</sequence>